<reference key="1">
    <citation type="journal article" date="2008" name="PLoS ONE">
        <title>Genome biology of Actinobacillus pleuropneumoniae JL03, an isolate of serotype 3 prevalent in China.</title>
        <authorList>
            <person name="Xu Z."/>
            <person name="Zhou Y."/>
            <person name="Li L."/>
            <person name="Zhou R."/>
            <person name="Xiao S."/>
            <person name="Wan Y."/>
            <person name="Zhang S."/>
            <person name="Wang K."/>
            <person name="Li W."/>
            <person name="Li L."/>
            <person name="Jin H."/>
            <person name="Kang M."/>
            <person name="Dalai B."/>
            <person name="Li T."/>
            <person name="Liu L."/>
            <person name="Cheng Y."/>
            <person name="Zhang L."/>
            <person name="Xu T."/>
            <person name="Zheng H."/>
            <person name="Pu S."/>
            <person name="Wang B."/>
            <person name="Gu W."/>
            <person name="Zhang X.L."/>
            <person name="Zhu G.-F."/>
            <person name="Wang S."/>
            <person name="Zhao G.-P."/>
            <person name="Chen H."/>
        </authorList>
    </citation>
    <scope>NUCLEOTIDE SEQUENCE [LARGE SCALE GENOMIC DNA]</scope>
    <source>
        <strain>JL03</strain>
    </source>
</reference>
<sequence length="347" mass="37518">MRILGIETSCDETGVAIYDEEKGLVANQLYSQIEMHADYGGVVPELASRDHIRKTLPLIQEALKEANLTAADIDGVVYTAGPGLVGALLVGSTIARSLAYAWNVPALGVHHMEGHLMAPMLEDNPPAFPFVALLISGGHTQLVKVEGVGQYEILGESIDDAAGEAFDKTGKLLGLDYPAGVAVSQLAEKGTPNRFVFPRPMTDRPGLDFSFSGLKTFAANTINANLDENGRLDEQTRCDIAHAFQQAVVDTIIIKCKRALQQTGYKRLVMAGGVSANKQLRTDLAEMMKNLKGEVYYPRPQFCTDNGAMIAYTGFLRLKNGETSDLSISVKPRWNMTELPDISTTGG</sequence>
<gene>
    <name evidence="1" type="primary">tsaD</name>
    <name type="synonym">gcp</name>
    <name type="ordered locus">APJL_1139</name>
</gene>
<keyword id="KW-0012">Acyltransferase</keyword>
<keyword id="KW-0963">Cytoplasm</keyword>
<keyword id="KW-0408">Iron</keyword>
<keyword id="KW-0479">Metal-binding</keyword>
<keyword id="KW-0808">Transferase</keyword>
<keyword id="KW-0819">tRNA processing</keyword>
<evidence type="ECO:0000255" key="1">
    <source>
        <dbReference type="HAMAP-Rule" id="MF_01445"/>
    </source>
</evidence>
<comment type="function">
    <text evidence="1">Required for the formation of a threonylcarbamoyl group on adenosine at position 37 (t(6)A37) in tRNAs that read codons beginning with adenine. Is involved in the transfer of the threonylcarbamoyl moiety of threonylcarbamoyl-AMP (TC-AMP) to the N6 group of A37, together with TsaE and TsaB. TsaD likely plays a direct catalytic role in this reaction.</text>
</comment>
<comment type="catalytic activity">
    <reaction evidence="1">
        <text>L-threonylcarbamoyladenylate + adenosine(37) in tRNA = N(6)-L-threonylcarbamoyladenosine(37) in tRNA + AMP + H(+)</text>
        <dbReference type="Rhea" id="RHEA:37059"/>
        <dbReference type="Rhea" id="RHEA-COMP:10162"/>
        <dbReference type="Rhea" id="RHEA-COMP:10163"/>
        <dbReference type="ChEBI" id="CHEBI:15378"/>
        <dbReference type="ChEBI" id="CHEBI:73682"/>
        <dbReference type="ChEBI" id="CHEBI:74411"/>
        <dbReference type="ChEBI" id="CHEBI:74418"/>
        <dbReference type="ChEBI" id="CHEBI:456215"/>
        <dbReference type="EC" id="2.3.1.234"/>
    </reaction>
</comment>
<comment type="cofactor">
    <cofactor evidence="1">
        <name>Fe(2+)</name>
        <dbReference type="ChEBI" id="CHEBI:29033"/>
    </cofactor>
    <text evidence="1">Binds 1 Fe(2+) ion per subunit.</text>
</comment>
<comment type="subcellular location">
    <subcellularLocation>
        <location evidence="1">Cytoplasm</location>
    </subcellularLocation>
</comment>
<comment type="similarity">
    <text evidence="1">Belongs to the KAE1 / TsaD family.</text>
</comment>
<protein>
    <recommendedName>
        <fullName evidence="1">tRNA N6-adenosine threonylcarbamoyltransferase</fullName>
        <ecNumber evidence="1">2.3.1.234</ecNumber>
    </recommendedName>
    <alternativeName>
        <fullName evidence="1">N6-L-threonylcarbamoyladenine synthase</fullName>
        <shortName evidence="1">t(6)A synthase</shortName>
    </alternativeName>
    <alternativeName>
        <fullName evidence="1">t(6)A37 threonylcarbamoyladenosine biosynthesis protein TsaD</fullName>
    </alternativeName>
    <alternativeName>
        <fullName evidence="1">tRNA threonylcarbamoyladenosine biosynthesis protein TsaD</fullName>
    </alternativeName>
</protein>
<accession>B0BQ60</accession>
<feature type="chain" id="PRO_1000145944" description="tRNA N6-adenosine threonylcarbamoyltransferase">
    <location>
        <begin position="1"/>
        <end position="347"/>
    </location>
</feature>
<feature type="binding site" evidence="1">
    <location>
        <position position="111"/>
    </location>
    <ligand>
        <name>Fe cation</name>
        <dbReference type="ChEBI" id="CHEBI:24875"/>
    </ligand>
</feature>
<feature type="binding site" evidence="1">
    <location>
        <position position="115"/>
    </location>
    <ligand>
        <name>Fe cation</name>
        <dbReference type="ChEBI" id="CHEBI:24875"/>
    </ligand>
</feature>
<feature type="binding site" evidence="1">
    <location>
        <begin position="134"/>
        <end position="138"/>
    </location>
    <ligand>
        <name>substrate</name>
    </ligand>
</feature>
<feature type="binding site" evidence="1">
    <location>
        <position position="167"/>
    </location>
    <ligand>
        <name>substrate</name>
    </ligand>
</feature>
<feature type="binding site" evidence="1">
    <location>
        <position position="180"/>
    </location>
    <ligand>
        <name>substrate</name>
    </ligand>
</feature>
<feature type="binding site" evidence="1">
    <location>
        <position position="277"/>
    </location>
    <ligand>
        <name>substrate</name>
    </ligand>
</feature>
<feature type="binding site" evidence="1">
    <location>
        <position position="305"/>
    </location>
    <ligand>
        <name>Fe cation</name>
        <dbReference type="ChEBI" id="CHEBI:24875"/>
    </ligand>
</feature>
<organism>
    <name type="scientific">Actinobacillus pleuropneumoniae serotype 3 (strain JL03)</name>
    <dbReference type="NCBI Taxonomy" id="434271"/>
    <lineage>
        <taxon>Bacteria</taxon>
        <taxon>Pseudomonadati</taxon>
        <taxon>Pseudomonadota</taxon>
        <taxon>Gammaproteobacteria</taxon>
        <taxon>Pasteurellales</taxon>
        <taxon>Pasteurellaceae</taxon>
        <taxon>Actinobacillus</taxon>
    </lineage>
</organism>
<proteinExistence type="inferred from homology"/>
<dbReference type="EC" id="2.3.1.234" evidence="1"/>
<dbReference type="EMBL" id="CP000687">
    <property type="protein sequence ID" value="ABY69695.1"/>
    <property type="molecule type" value="Genomic_DNA"/>
</dbReference>
<dbReference type="RefSeq" id="WP_005598001.1">
    <property type="nucleotide sequence ID" value="NC_010278.1"/>
</dbReference>
<dbReference type="SMR" id="B0BQ60"/>
<dbReference type="GeneID" id="48599352"/>
<dbReference type="KEGG" id="apj:APJL_1139"/>
<dbReference type="HOGENOM" id="CLU_023208_0_0_6"/>
<dbReference type="Proteomes" id="UP000008547">
    <property type="component" value="Chromosome"/>
</dbReference>
<dbReference type="GO" id="GO:0005737">
    <property type="term" value="C:cytoplasm"/>
    <property type="evidence" value="ECO:0007669"/>
    <property type="project" value="UniProtKB-SubCell"/>
</dbReference>
<dbReference type="GO" id="GO:0005506">
    <property type="term" value="F:iron ion binding"/>
    <property type="evidence" value="ECO:0007669"/>
    <property type="project" value="UniProtKB-UniRule"/>
</dbReference>
<dbReference type="GO" id="GO:0061711">
    <property type="term" value="F:N(6)-L-threonylcarbamoyladenine synthase activity"/>
    <property type="evidence" value="ECO:0007669"/>
    <property type="project" value="UniProtKB-EC"/>
</dbReference>
<dbReference type="GO" id="GO:0002949">
    <property type="term" value="P:tRNA threonylcarbamoyladenosine modification"/>
    <property type="evidence" value="ECO:0007669"/>
    <property type="project" value="UniProtKB-UniRule"/>
</dbReference>
<dbReference type="CDD" id="cd24133">
    <property type="entry name" value="ASKHA_NBD_TsaD_bac"/>
    <property type="match status" value="1"/>
</dbReference>
<dbReference type="FunFam" id="3.30.420.40:FF:000031">
    <property type="entry name" value="tRNA N6-adenosine threonylcarbamoyltransferase"/>
    <property type="match status" value="1"/>
</dbReference>
<dbReference type="Gene3D" id="3.30.420.40">
    <property type="match status" value="2"/>
</dbReference>
<dbReference type="HAMAP" id="MF_01445">
    <property type="entry name" value="TsaD"/>
    <property type="match status" value="1"/>
</dbReference>
<dbReference type="InterPro" id="IPR043129">
    <property type="entry name" value="ATPase_NBD"/>
</dbReference>
<dbReference type="InterPro" id="IPR000905">
    <property type="entry name" value="Gcp-like_dom"/>
</dbReference>
<dbReference type="InterPro" id="IPR017861">
    <property type="entry name" value="KAE1/TsaD"/>
</dbReference>
<dbReference type="InterPro" id="IPR017860">
    <property type="entry name" value="Peptidase_M22_CS"/>
</dbReference>
<dbReference type="InterPro" id="IPR022450">
    <property type="entry name" value="TsaD"/>
</dbReference>
<dbReference type="NCBIfam" id="TIGR00329">
    <property type="entry name" value="gcp_kae1"/>
    <property type="match status" value="1"/>
</dbReference>
<dbReference type="NCBIfam" id="TIGR03723">
    <property type="entry name" value="T6A_TsaD_YgjD"/>
    <property type="match status" value="1"/>
</dbReference>
<dbReference type="PANTHER" id="PTHR11735">
    <property type="entry name" value="TRNA N6-ADENOSINE THREONYLCARBAMOYLTRANSFERASE"/>
    <property type="match status" value="1"/>
</dbReference>
<dbReference type="PANTHER" id="PTHR11735:SF6">
    <property type="entry name" value="TRNA N6-ADENOSINE THREONYLCARBAMOYLTRANSFERASE, MITOCHONDRIAL"/>
    <property type="match status" value="1"/>
</dbReference>
<dbReference type="Pfam" id="PF00814">
    <property type="entry name" value="TsaD"/>
    <property type="match status" value="1"/>
</dbReference>
<dbReference type="PRINTS" id="PR00789">
    <property type="entry name" value="OSIALOPTASE"/>
</dbReference>
<dbReference type="SUPFAM" id="SSF53067">
    <property type="entry name" value="Actin-like ATPase domain"/>
    <property type="match status" value="2"/>
</dbReference>
<dbReference type="PROSITE" id="PS01016">
    <property type="entry name" value="GLYCOPROTEASE"/>
    <property type="match status" value="1"/>
</dbReference>
<name>TSAD_ACTPJ</name>